<keyword id="KW-1003">Cell membrane</keyword>
<keyword id="KW-0472">Membrane</keyword>
<keyword id="KW-1185">Reference proteome</keyword>
<keyword id="KW-0812">Transmembrane</keyword>
<keyword id="KW-1133">Transmembrane helix</keyword>
<accession>P43932</accession>
<comment type="subcellular location">
    <subcellularLocation>
        <location evidence="2">Cell membrane</location>
        <topology evidence="2">Multi-pass membrane protein</topology>
    </subcellularLocation>
</comment>
<comment type="similarity">
    <text evidence="2">Belongs to the UPF0053 family.</text>
</comment>
<name>Y056_HAEIN</name>
<feature type="chain" id="PRO_0000088369" description="UPF0053 protein HI_0056">
    <location>
        <begin position="1"/>
        <end position="237"/>
    </location>
</feature>
<feature type="transmembrane region" description="Helical" evidence="1">
    <location>
        <begin position="12"/>
        <end position="32"/>
    </location>
</feature>
<feature type="transmembrane region" description="Helical" evidence="1">
    <location>
        <begin position="49"/>
        <end position="69"/>
    </location>
</feature>
<feature type="transmembrane region" description="Helical" evidence="1">
    <location>
        <begin position="90"/>
        <end position="110"/>
    </location>
</feature>
<feature type="transmembrane region" description="Helical" evidence="1">
    <location>
        <begin position="126"/>
        <end position="146"/>
    </location>
</feature>
<feature type="transmembrane region" description="Helical" evidence="1">
    <location>
        <begin position="151"/>
        <end position="171"/>
    </location>
</feature>
<feature type="transmembrane region" description="Helical" evidence="1">
    <location>
        <begin position="188"/>
        <end position="208"/>
    </location>
</feature>
<feature type="transmembrane region" description="Helical" evidence="1">
    <location>
        <begin position="210"/>
        <end position="230"/>
    </location>
</feature>
<dbReference type="EMBL" id="L42023">
    <property type="protein sequence ID" value="AAC21734.1"/>
    <property type="molecule type" value="Genomic_DNA"/>
</dbReference>
<dbReference type="PIR" id="D64000">
    <property type="entry name" value="D64000"/>
</dbReference>
<dbReference type="RefSeq" id="NP_438229.1">
    <property type="nucleotide sequence ID" value="NC_000907.1"/>
</dbReference>
<dbReference type="STRING" id="71421.HI_0056"/>
<dbReference type="EnsemblBacteria" id="AAC21734">
    <property type="protein sequence ID" value="AAC21734"/>
    <property type="gene ID" value="HI_0056"/>
</dbReference>
<dbReference type="KEGG" id="hin:HI_0056"/>
<dbReference type="PATRIC" id="fig|71421.8.peg.56"/>
<dbReference type="eggNOG" id="COG0861">
    <property type="taxonomic scope" value="Bacteria"/>
</dbReference>
<dbReference type="HOGENOM" id="CLU_064910_0_0_6"/>
<dbReference type="OrthoDB" id="9805314at2"/>
<dbReference type="PhylomeDB" id="P43932"/>
<dbReference type="BioCyc" id="HINF71421:G1GJ1-57-MONOMER"/>
<dbReference type="Proteomes" id="UP000000579">
    <property type="component" value="Chromosome"/>
</dbReference>
<dbReference type="GO" id="GO:0005886">
    <property type="term" value="C:plasma membrane"/>
    <property type="evidence" value="ECO:0000318"/>
    <property type="project" value="GO_Central"/>
</dbReference>
<dbReference type="InterPro" id="IPR005496">
    <property type="entry name" value="Integral_membrane_TerC"/>
</dbReference>
<dbReference type="PANTHER" id="PTHR30060:SF0">
    <property type="entry name" value="COILED-COIL PROTEIN (DUF2040)-RELATED"/>
    <property type="match status" value="1"/>
</dbReference>
<dbReference type="PANTHER" id="PTHR30060">
    <property type="entry name" value="INNER MEMBRANE PROTEIN"/>
    <property type="match status" value="1"/>
</dbReference>
<dbReference type="Pfam" id="PF03741">
    <property type="entry name" value="TerC"/>
    <property type="match status" value="1"/>
</dbReference>
<protein>
    <recommendedName>
        <fullName>UPF0053 protein HI_0056</fullName>
    </recommendedName>
</protein>
<sequence length="237" mass="26231">MFEWIADPEAWISLVTLAALEIVLGIDNIIFINILVGRLPERQRQSGRILGLALAMLTRILLLMSLAWIMKLTAPLFTVFNQEISGRDLILLIGGLFLIIKSSGEIKEAINHQEHHESESKNKVSYLGVLIQIAVLDIVFSLDSVITAVGMASHLPVMILAIMIAVGVMMFAAKPIGDFVDTHPTLKILALAFLVLVGISLIAESLDIHIPKGYIYFAMGFSVVVEMINIRMRRLMK</sequence>
<reference key="1">
    <citation type="journal article" date="1995" name="Science">
        <title>Whole-genome random sequencing and assembly of Haemophilus influenzae Rd.</title>
        <authorList>
            <person name="Fleischmann R.D."/>
            <person name="Adams M.D."/>
            <person name="White O."/>
            <person name="Clayton R.A."/>
            <person name="Kirkness E.F."/>
            <person name="Kerlavage A.R."/>
            <person name="Bult C.J."/>
            <person name="Tomb J.-F."/>
            <person name="Dougherty B.A."/>
            <person name="Merrick J.M."/>
            <person name="McKenney K."/>
            <person name="Sutton G.G."/>
            <person name="FitzHugh W."/>
            <person name="Fields C.A."/>
            <person name="Gocayne J.D."/>
            <person name="Scott J.D."/>
            <person name="Shirley R."/>
            <person name="Liu L.-I."/>
            <person name="Glodek A."/>
            <person name="Kelley J.M."/>
            <person name="Weidman J.F."/>
            <person name="Phillips C.A."/>
            <person name="Spriggs T."/>
            <person name="Hedblom E."/>
            <person name="Cotton M.D."/>
            <person name="Utterback T.R."/>
            <person name="Hanna M.C."/>
            <person name="Nguyen D.T."/>
            <person name="Saudek D.M."/>
            <person name="Brandon R.C."/>
            <person name="Fine L.D."/>
            <person name="Fritchman J.L."/>
            <person name="Fuhrmann J.L."/>
            <person name="Geoghagen N.S.M."/>
            <person name="Gnehm C.L."/>
            <person name="McDonald L.A."/>
            <person name="Small K.V."/>
            <person name="Fraser C.M."/>
            <person name="Smith H.O."/>
            <person name="Venter J.C."/>
        </authorList>
    </citation>
    <scope>NUCLEOTIDE SEQUENCE [LARGE SCALE GENOMIC DNA]</scope>
    <source>
        <strain>ATCC 51907 / DSM 11121 / KW20 / Rd</strain>
    </source>
</reference>
<evidence type="ECO:0000255" key="1"/>
<evidence type="ECO:0000305" key="2"/>
<organism>
    <name type="scientific">Haemophilus influenzae (strain ATCC 51907 / DSM 11121 / KW20 / Rd)</name>
    <dbReference type="NCBI Taxonomy" id="71421"/>
    <lineage>
        <taxon>Bacteria</taxon>
        <taxon>Pseudomonadati</taxon>
        <taxon>Pseudomonadota</taxon>
        <taxon>Gammaproteobacteria</taxon>
        <taxon>Pasteurellales</taxon>
        <taxon>Pasteurellaceae</taxon>
        <taxon>Haemophilus</taxon>
    </lineage>
</organism>
<gene>
    <name type="ordered locus">HI_0056</name>
</gene>
<proteinExistence type="inferred from homology"/>